<evidence type="ECO:0000255" key="1">
    <source>
        <dbReference type="HAMAP-Rule" id="MF_00508"/>
    </source>
</evidence>
<evidence type="ECO:0000305" key="2"/>
<name>RS10_ECO55</name>
<proteinExistence type="inferred from homology"/>
<feature type="chain" id="PRO_1000146054" description="Small ribosomal subunit protein uS10">
    <location>
        <begin position="1"/>
        <end position="103"/>
    </location>
</feature>
<organism>
    <name type="scientific">Escherichia coli (strain 55989 / EAEC)</name>
    <dbReference type="NCBI Taxonomy" id="585055"/>
    <lineage>
        <taxon>Bacteria</taxon>
        <taxon>Pseudomonadati</taxon>
        <taxon>Pseudomonadota</taxon>
        <taxon>Gammaproteobacteria</taxon>
        <taxon>Enterobacterales</taxon>
        <taxon>Enterobacteriaceae</taxon>
        <taxon>Escherichia</taxon>
    </lineage>
</organism>
<keyword id="KW-1185">Reference proteome</keyword>
<keyword id="KW-0687">Ribonucleoprotein</keyword>
<keyword id="KW-0689">Ribosomal protein</keyword>
<protein>
    <recommendedName>
        <fullName evidence="1">Small ribosomal subunit protein uS10</fullName>
    </recommendedName>
    <alternativeName>
        <fullName evidence="2">30S ribosomal protein S10</fullName>
    </alternativeName>
</protein>
<gene>
    <name evidence="1" type="primary">rpsJ</name>
    <name type="ordered locus">EC55989_3737</name>
</gene>
<accession>B7L4L0</accession>
<reference key="1">
    <citation type="journal article" date="2009" name="PLoS Genet.">
        <title>Organised genome dynamics in the Escherichia coli species results in highly diverse adaptive paths.</title>
        <authorList>
            <person name="Touchon M."/>
            <person name="Hoede C."/>
            <person name="Tenaillon O."/>
            <person name="Barbe V."/>
            <person name="Baeriswyl S."/>
            <person name="Bidet P."/>
            <person name="Bingen E."/>
            <person name="Bonacorsi S."/>
            <person name="Bouchier C."/>
            <person name="Bouvet O."/>
            <person name="Calteau A."/>
            <person name="Chiapello H."/>
            <person name="Clermont O."/>
            <person name="Cruveiller S."/>
            <person name="Danchin A."/>
            <person name="Diard M."/>
            <person name="Dossat C."/>
            <person name="Karoui M.E."/>
            <person name="Frapy E."/>
            <person name="Garry L."/>
            <person name="Ghigo J.M."/>
            <person name="Gilles A.M."/>
            <person name="Johnson J."/>
            <person name="Le Bouguenec C."/>
            <person name="Lescat M."/>
            <person name="Mangenot S."/>
            <person name="Martinez-Jehanne V."/>
            <person name="Matic I."/>
            <person name="Nassif X."/>
            <person name="Oztas S."/>
            <person name="Petit M.A."/>
            <person name="Pichon C."/>
            <person name="Rouy Z."/>
            <person name="Ruf C.S."/>
            <person name="Schneider D."/>
            <person name="Tourret J."/>
            <person name="Vacherie B."/>
            <person name="Vallenet D."/>
            <person name="Medigue C."/>
            <person name="Rocha E.P.C."/>
            <person name="Denamur E."/>
        </authorList>
    </citation>
    <scope>NUCLEOTIDE SEQUENCE [LARGE SCALE GENOMIC DNA]</scope>
    <source>
        <strain>55989 / EAEC</strain>
    </source>
</reference>
<dbReference type="EMBL" id="CU928145">
    <property type="protein sequence ID" value="CAV00040.1"/>
    <property type="molecule type" value="Genomic_DNA"/>
</dbReference>
<dbReference type="RefSeq" id="WP_001181004.1">
    <property type="nucleotide sequence ID" value="NZ_CP028304.1"/>
</dbReference>
<dbReference type="SMR" id="B7L4L0"/>
<dbReference type="GeneID" id="93778666"/>
<dbReference type="KEGG" id="eck:EC55989_3737"/>
<dbReference type="HOGENOM" id="CLU_122625_1_3_6"/>
<dbReference type="Proteomes" id="UP000000746">
    <property type="component" value="Chromosome"/>
</dbReference>
<dbReference type="GO" id="GO:1990904">
    <property type="term" value="C:ribonucleoprotein complex"/>
    <property type="evidence" value="ECO:0007669"/>
    <property type="project" value="UniProtKB-KW"/>
</dbReference>
<dbReference type="GO" id="GO:0005840">
    <property type="term" value="C:ribosome"/>
    <property type="evidence" value="ECO:0007669"/>
    <property type="project" value="UniProtKB-KW"/>
</dbReference>
<dbReference type="GO" id="GO:0003735">
    <property type="term" value="F:structural constituent of ribosome"/>
    <property type="evidence" value="ECO:0007669"/>
    <property type="project" value="InterPro"/>
</dbReference>
<dbReference type="GO" id="GO:0000049">
    <property type="term" value="F:tRNA binding"/>
    <property type="evidence" value="ECO:0007669"/>
    <property type="project" value="UniProtKB-UniRule"/>
</dbReference>
<dbReference type="GO" id="GO:0006412">
    <property type="term" value="P:translation"/>
    <property type="evidence" value="ECO:0007669"/>
    <property type="project" value="UniProtKB-UniRule"/>
</dbReference>
<dbReference type="FunFam" id="3.30.70.600:FF:000001">
    <property type="entry name" value="30S ribosomal protein S10"/>
    <property type="match status" value="1"/>
</dbReference>
<dbReference type="Gene3D" id="3.30.70.600">
    <property type="entry name" value="Ribosomal protein S10 domain"/>
    <property type="match status" value="1"/>
</dbReference>
<dbReference type="HAMAP" id="MF_00508">
    <property type="entry name" value="Ribosomal_uS10"/>
    <property type="match status" value="1"/>
</dbReference>
<dbReference type="InterPro" id="IPR001848">
    <property type="entry name" value="Ribosomal_uS10"/>
</dbReference>
<dbReference type="InterPro" id="IPR018268">
    <property type="entry name" value="Ribosomal_uS10_CS"/>
</dbReference>
<dbReference type="InterPro" id="IPR027486">
    <property type="entry name" value="Ribosomal_uS10_dom"/>
</dbReference>
<dbReference type="InterPro" id="IPR036838">
    <property type="entry name" value="Ribosomal_uS10_dom_sf"/>
</dbReference>
<dbReference type="NCBIfam" id="NF001861">
    <property type="entry name" value="PRK00596.1"/>
    <property type="match status" value="1"/>
</dbReference>
<dbReference type="NCBIfam" id="TIGR01049">
    <property type="entry name" value="rpsJ_bact"/>
    <property type="match status" value="1"/>
</dbReference>
<dbReference type="PANTHER" id="PTHR11700">
    <property type="entry name" value="30S RIBOSOMAL PROTEIN S10 FAMILY MEMBER"/>
    <property type="match status" value="1"/>
</dbReference>
<dbReference type="Pfam" id="PF00338">
    <property type="entry name" value="Ribosomal_S10"/>
    <property type="match status" value="1"/>
</dbReference>
<dbReference type="PRINTS" id="PR00971">
    <property type="entry name" value="RIBOSOMALS10"/>
</dbReference>
<dbReference type="SMART" id="SM01403">
    <property type="entry name" value="Ribosomal_S10"/>
    <property type="match status" value="1"/>
</dbReference>
<dbReference type="SUPFAM" id="SSF54999">
    <property type="entry name" value="Ribosomal protein S10"/>
    <property type="match status" value="1"/>
</dbReference>
<dbReference type="PROSITE" id="PS00361">
    <property type="entry name" value="RIBOSOMAL_S10"/>
    <property type="match status" value="1"/>
</dbReference>
<comment type="function">
    <text evidence="1">Involved in the binding of tRNA to the ribosomes.</text>
</comment>
<comment type="subunit">
    <text evidence="1">Part of the 30S ribosomal subunit.</text>
</comment>
<comment type="similarity">
    <text evidence="1">Belongs to the universal ribosomal protein uS10 family.</text>
</comment>
<sequence length="103" mass="11736">MQNQRIRIRLKAFDHRLIDQATAEIVETAKRTGAQVRGPIPLPTRKERFTVLISPHVNKDARDQYEIRTHLRLVDIVEPTEKTVDALMRLDLAAGVDVQISLG</sequence>